<feature type="chain" id="PRO_0000058035" description="Prophage late control protein OgrK">
    <location>
        <begin position="1"/>
        <end position="72"/>
    </location>
</feature>
<feature type="sequence variant" description="In strain: B6.">
    <original>V</original>
    <variation>A</variation>
    <location>
        <position position="57"/>
    </location>
</feature>
<keyword id="KW-0010">Activator</keyword>
<keyword id="KW-1185">Reference proteome</keyword>
<keyword id="KW-0804">Transcription</keyword>
<keyword id="KW-0805">Transcription regulation</keyword>
<evidence type="ECO:0000305" key="1"/>
<organism>
    <name type="scientific">Escherichia coli (strain K12)</name>
    <dbReference type="NCBI Taxonomy" id="83333"/>
    <lineage>
        <taxon>Bacteria</taxon>
        <taxon>Pseudomonadati</taxon>
        <taxon>Pseudomonadota</taxon>
        <taxon>Gammaproteobacteria</taxon>
        <taxon>Enterobacterales</taxon>
        <taxon>Enterobacteriaceae</taxon>
        <taxon>Escherichia</taxon>
    </lineage>
</organism>
<name>OGRK_ECOLI</name>
<accession>P37057</accession>
<reference key="1">
    <citation type="journal article" date="1992" name="J. Bacteriol.">
        <title>Escherichia coli K-12 and B contain functional bacteriophage P2 ogr genes.</title>
        <authorList>
            <person name="Slettan A."/>
            <person name="Gebhardt K."/>
            <person name="Kristiansen E."/>
            <person name="Birkeland N.K.K."/>
            <person name="Lindqvist B.H."/>
        </authorList>
    </citation>
    <scope>NUCLEOTIDE SEQUENCE [GENOMIC DNA]</scope>
    <source>
        <strain>K12</strain>
    </source>
</reference>
<reference key="2">
    <citation type="journal article" date="1992" name="J. Bacteriol.">
        <title>Attachment sites for bacteriophage P2 on the Escherichia coli chromosome: DNA sequences, localization on the physical map, and detection of a P2-like remnant in E. coli K-12 derivatives.</title>
        <authorList>
            <person name="Barreiro V."/>
            <person name="Haggaard-Ljungquist E."/>
        </authorList>
    </citation>
    <scope>NUCLEOTIDE SEQUENCE [GENOMIC DNA]</scope>
    <source>
        <strain>K12</strain>
    </source>
</reference>
<reference key="3">
    <citation type="journal article" date="1996" name="DNA Res.">
        <title>A 460-kb DNA sequence of the Escherichia coli K-12 genome corresponding to the 40.1-50.0 min region on the linkage map.</title>
        <authorList>
            <person name="Itoh T."/>
            <person name="Aiba H."/>
            <person name="Baba T."/>
            <person name="Fujita K."/>
            <person name="Hayashi K."/>
            <person name="Inada T."/>
            <person name="Isono K."/>
            <person name="Kasai H."/>
            <person name="Kimura S."/>
            <person name="Kitakawa M."/>
            <person name="Kitagawa M."/>
            <person name="Makino K."/>
            <person name="Miki T."/>
            <person name="Mizobuchi K."/>
            <person name="Mori H."/>
            <person name="Mori T."/>
            <person name="Motomura K."/>
            <person name="Nakade S."/>
            <person name="Nakamura Y."/>
            <person name="Nashimoto H."/>
            <person name="Nishio Y."/>
            <person name="Oshima T."/>
            <person name="Saito N."/>
            <person name="Sampei G."/>
            <person name="Seki Y."/>
            <person name="Sivasundaram S."/>
            <person name="Tagami H."/>
            <person name="Takeda J."/>
            <person name="Takemoto K."/>
            <person name="Wada C."/>
            <person name="Yamamoto Y."/>
            <person name="Horiuchi T."/>
        </authorList>
    </citation>
    <scope>NUCLEOTIDE SEQUENCE [LARGE SCALE GENOMIC DNA]</scope>
    <source>
        <strain>K12 / W3110 / ATCC 27325 / DSM 5911</strain>
    </source>
</reference>
<reference key="4">
    <citation type="journal article" date="1997" name="Science">
        <title>The complete genome sequence of Escherichia coli K-12.</title>
        <authorList>
            <person name="Blattner F.R."/>
            <person name="Plunkett G. III"/>
            <person name="Bloch C.A."/>
            <person name="Perna N.T."/>
            <person name="Burland V."/>
            <person name="Riley M."/>
            <person name="Collado-Vides J."/>
            <person name="Glasner J.D."/>
            <person name="Rode C.K."/>
            <person name="Mayhew G.F."/>
            <person name="Gregor J."/>
            <person name="Davis N.W."/>
            <person name="Kirkpatrick H.A."/>
            <person name="Goeden M.A."/>
            <person name="Rose D.J."/>
            <person name="Mau B."/>
            <person name="Shao Y."/>
        </authorList>
    </citation>
    <scope>NUCLEOTIDE SEQUENCE [LARGE SCALE GENOMIC DNA]</scope>
    <source>
        <strain>K12 / MG1655 / ATCC 47076</strain>
    </source>
</reference>
<reference key="5">
    <citation type="journal article" date="2006" name="Mol. Syst. Biol.">
        <title>Highly accurate genome sequences of Escherichia coli K-12 strains MG1655 and W3110.</title>
        <authorList>
            <person name="Hayashi K."/>
            <person name="Morooka N."/>
            <person name="Yamamoto Y."/>
            <person name="Fujita K."/>
            <person name="Isono K."/>
            <person name="Choi S."/>
            <person name="Ohtsubo E."/>
            <person name="Baba T."/>
            <person name="Wanner B.L."/>
            <person name="Mori H."/>
            <person name="Horiuchi T."/>
        </authorList>
    </citation>
    <scope>NUCLEOTIDE SEQUENCE [LARGE SCALE GENOMIC DNA]</scope>
    <source>
        <strain>K12 / W3110 / ATCC 27325 / DSM 5911</strain>
    </source>
</reference>
<sequence length="72" mass="8430">MFHCPLCQHAAHARTSRYITDTTKERYHQCQNVNCSATFITYESVQRYIVKPGEVHVVRPHPLPSGQQIMWM</sequence>
<protein>
    <recommendedName>
        <fullName evidence="1">Prophage late control protein OgrK</fullName>
    </recommendedName>
    <alternativeName>
        <fullName>Prophage P2 OGR protein</fullName>
    </alternativeName>
</protein>
<proteinExistence type="predicted"/>
<dbReference type="EMBL" id="M81463">
    <property type="protein sequence ID" value="AAD15219.1"/>
    <property type="molecule type" value="Genomic_DNA"/>
</dbReference>
<dbReference type="EMBL" id="U00096">
    <property type="protein sequence ID" value="AAC75143.1"/>
    <property type="molecule type" value="Genomic_DNA"/>
</dbReference>
<dbReference type="EMBL" id="AP009048">
    <property type="protein sequence ID" value="BAA15937.1"/>
    <property type="molecule type" value="Genomic_DNA"/>
</dbReference>
<dbReference type="PIR" id="A41889">
    <property type="entry name" value="A41889"/>
</dbReference>
<dbReference type="RefSeq" id="NP_416586.1">
    <property type="nucleotide sequence ID" value="NC_000913.3"/>
</dbReference>
<dbReference type="RefSeq" id="WP_000468310.1">
    <property type="nucleotide sequence ID" value="NZ_LN832404.1"/>
</dbReference>
<dbReference type="SMR" id="P37057"/>
<dbReference type="BioGRID" id="4261755">
    <property type="interactions" value="118"/>
</dbReference>
<dbReference type="FunCoup" id="P37057">
    <property type="interactions" value="33"/>
</dbReference>
<dbReference type="IntAct" id="P37057">
    <property type="interactions" value="2"/>
</dbReference>
<dbReference type="STRING" id="511145.b2082"/>
<dbReference type="PaxDb" id="511145-b2082"/>
<dbReference type="EnsemblBacteria" id="AAC75143">
    <property type="protein sequence ID" value="AAC75143"/>
    <property type="gene ID" value="b2082"/>
</dbReference>
<dbReference type="GeneID" id="945404"/>
<dbReference type="KEGG" id="ecj:JW2067"/>
<dbReference type="KEGG" id="eco:b2082"/>
<dbReference type="PATRIC" id="fig|511145.12.peg.2160"/>
<dbReference type="EchoBASE" id="EB2324"/>
<dbReference type="eggNOG" id="ENOG5032Y32">
    <property type="taxonomic scope" value="Bacteria"/>
</dbReference>
<dbReference type="HOGENOM" id="CLU_170894_0_0_6"/>
<dbReference type="InParanoid" id="P37057"/>
<dbReference type="OMA" id="CTFATHE"/>
<dbReference type="OrthoDB" id="6895359at2"/>
<dbReference type="BioCyc" id="EcoCyc:G7119-MONOMER"/>
<dbReference type="PRO" id="PR:P37057"/>
<dbReference type="Proteomes" id="UP000000625">
    <property type="component" value="Chromosome"/>
</dbReference>
<dbReference type="GO" id="GO:0045893">
    <property type="term" value="P:positive regulation of DNA-templated transcription"/>
    <property type="evidence" value="ECO:0000269"/>
    <property type="project" value="EcoCyc"/>
</dbReference>
<dbReference type="InterPro" id="IPR007684">
    <property type="entry name" value="Znf_Ogr/Delta"/>
</dbReference>
<dbReference type="NCBIfam" id="NF007241">
    <property type="entry name" value="PRK09678.1"/>
    <property type="match status" value="1"/>
</dbReference>
<dbReference type="Pfam" id="PF04606">
    <property type="entry name" value="Ogr_Delta"/>
    <property type="match status" value="1"/>
</dbReference>
<comment type="function">
    <text>Cryptic version of the phage P2 OGR protein which acts as an activator of P2 late transcription.</text>
</comment>
<gene>
    <name type="primary">ogrK</name>
    <name type="ordered locus">b2082</name>
    <name type="ordered locus">JW2067</name>
</gene>